<keyword id="KW-0021">Allosteric enzyme</keyword>
<keyword id="KW-0067">ATP-binding</keyword>
<keyword id="KW-0319">Glycerol metabolism</keyword>
<keyword id="KW-0418">Kinase</keyword>
<keyword id="KW-0479">Metal-binding</keyword>
<keyword id="KW-0547">Nucleotide-binding</keyword>
<keyword id="KW-0808">Transferase</keyword>
<keyword id="KW-0862">Zinc</keyword>
<protein>
    <recommendedName>
        <fullName evidence="1">Glycerol kinase</fullName>
        <ecNumber evidence="1">2.7.1.30</ecNumber>
    </recommendedName>
    <alternativeName>
        <fullName evidence="1">ATP:glycerol 3-phosphotransferase</fullName>
    </alternativeName>
    <alternativeName>
        <fullName evidence="1">Glycerokinase</fullName>
        <shortName evidence="1">GK</shortName>
    </alternativeName>
</protein>
<proteinExistence type="inferred from homology"/>
<gene>
    <name evidence="1" type="primary">glpK</name>
    <name type="ordered locus">ECIAI1_4131</name>
</gene>
<evidence type="ECO:0000255" key="1">
    <source>
        <dbReference type="HAMAP-Rule" id="MF_00186"/>
    </source>
</evidence>
<feature type="chain" id="PRO_1000118551" description="Glycerol kinase">
    <location>
        <begin position="1"/>
        <end position="502"/>
    </location>
</feature>
<feature type="binding site" evidence="1">
    <location>
        <position position="14"/>
    </location>
    <ligand>
        <name>ADP</name>
        <dbReference type="ChEBI" id="CHEBI:456216"/>
    </ligand>
</feature>
<feature type="binding site" evidence="1">
    <location>
        <position position="14"/>
    </location>
    <ligand>
        <name>ATP</name>
        <dbReference type="ChEBI" id="CHEBI:30616"/>
    </ligand>
</feature>
<feature type="binding site" evidence="1">
    <location>
        <position position="14"/>
    </location>
    <ligand>
        <name>sn-glycerol 3-phosphate</name>
        <dbReference type="ChEBI" id="CHEBI:57597"/>
    </ligand>
</feature>
<feature type="binding site" evidence="1">
    <location>
        <position position="15"/>
    </location>
    <ligand>
        <name>ATP</name>
        <dbReference type="ChEBI" id="CHEBI:30616"/>
    </ligand>
</feature>
<feature type="binding site" evidence="1">
    <location>
        <position position="16"/>
    </location>
    <ligand>
        <name>ATP</name>
        <dbReference type="ChEBI" id="CHEBI:30616"/>
    </ligand>
</feature>
<feature type="binding site" evidence="1">
    <location>
        <position position="18"/>
    </location>
    <ligand>
        <name>ADP</name>
        <dbReference type="ChEBI" id="CHEBI:456216"/>
    </ligand>
</feature>
<feature type="binding site" evidence="1">
    <location>
        <position position="84"/>
    </location>
    <ligand>
        <name>glycerol</name>
        <dbReference type="ChEBI" id="CHEBI:17754"/>
    </ligand>
</feature>
<feature type="binding site" evidence="1">
    <location>
        <position position="84"/>
    </location>
    <ligand>
        <name>sn-glycerol 3-phosphate</name>
        <dbReference type="ChEBI" id="CHEBI:57597"/>
    </ligand>
</feature>
<feature type="binding site" evidence="1">
    <location>
        <position position="85"/>
    </location>
    <ligand>
        <name>glycerol</name>
        <dbReference type="ChEBI" id="CHEBI:17754"/>
    </ligand>
</feature>
<feature type="binding site" evidence="1">
    <location>
        <position position="85"/>
    </location>
    <ligand>
        <name>sn-glycerol 3-phosphate</name>
        <dbReference type="ChEBI" id="CHEBI:57597"/>
    </ligand>
</feature>
<feature type="binding site" evidence="1">
    <location>
        <position position="136"/>
    </location>
    <ligand>
        <name>glycerol</name>
        <dbReference type="ChEBI" id="CHEBI:17754"/>
    </ligand>
</feature>
<feature type="binding site" evidence="1">
    <location>
        <position position="136"/>
    </location>
    <ligand>
        <name>sn-glycerol 3-phosphate</name>
        <dbReference type="ChEBI" id="CHEBI:57597"/>
    </ligand>
</feature>
<feature type="binding site" evidence="1">
    <location>
        <position position="246"/>
    </location>
    <ligand>
        <name>glycerol</name>
        <dbReference type="ChEBI" id="CHEBI:17754"/>
    </ligand>
</feature>
<feature type="binding site" evidence="1">
    <location>
        <position position="246"/>
    </location>
    <ligand>
        <name>sn-glycerol 3-phosphate</name>
        <dbReference type="ChEBI" id="CHEBI:57597"/>
    </ligand>
</feature>
<feature type="binding site" evidence="1">
    <location>
        <position position="247"/>
    </location>
    <ligand>
        <name>glycerol</name>
        <dbReference type="ChEBI" id="CHEBI:17754"/>
    </ligand>
</feature>
<feature type="binding site" evidence="1">
    <location>
        <position position="268"/>
    </location>
    <ligand>
        <name>ADP</name>
        <dbReference type="ChEBI" id="CHEBI:456216"/>
    </ligand>
</feature>
<feature type="binding site" evidence="1">
    <location>
        <position position="268"/>
    </location>
    <ligand>
        <name>ATP</name>
        <dbReference type="ChEBI" id="CHEBI:30616"/>
    </ligand>
</feature>
<feature type="binding site" evidence="1">
    <location>
        <position position="311"/>
    </location>
    <ligand>
        <name>ADP</name>
        <dbReference type="ChEBI" id="CHEBI:456216"/>
    </ligand>
</feature>
<feature type="binding site" evidence="1">
    <location>
        <position position="311"/>
    </location>
    <ligand>
        <name>ATP</name>
        <dbReference type="ChEBI" id="CHEBI:30616"/>
    </ligand>
</feature>
<feature type="binding site" evidence="1">
    <location>
        <position position="315"/>
    </location>
    <ligand>
        <name>ATP</name>
        <dbReference type="ChEBI" id="CHEBI:30616"/>
    </ligand>
</feature>
<feature type="binding site" evidence="1">
    <location>
        <position position="412"/>
    </location>
    <ligand>
        <name>ADP</name>
        <dbReference type="ChEBI" id="CHEBI:456216"/>
    </ligand>
</feature>
<feature type="binding site" evidence="1">
    <location>
        <position position="412"/>
    </location>
    <ligand>
        <name>ATP</name>
        <dbReference type="ChEBI" id="CHEBI:30616"/>
    </ligand>
</feature>
<feature type="binding site" evidence="1">
    <location>
        <position position="416"/>
    </location>
    <ligand>
        <name>ADP</name>
        <dbReference type="ChEBI" id="CHEBI:456216"/>
    </ligand>
</feature>
<sequence>MTEKKYIVALDQGTTSSRAVVMDHDANIISVSQREFEQIYPKPGWVEHDPMEIWATQSSTLVEVLAKADISSDQIAAIGITNQRETTILWEKETGKPIYNAIVWQCRRTAEICEHLKRDGLEDYIRSNTGLVIDPYFSGTKVKWILDHVEGSRERARRGELLFGTVDTWLIWKMTQGRVHVTDYTNASRTMLFNIHTLDWDDKMLEVLDIPREMLPEVRRSSEVYGQTNIGGKGGTRIPISGIAGDQQAALFGQLCVKEGMAKNTYGTGCFMLMNTGEKAVKSENGLLTTIACGPTGEVNYALEGAVFMAGASIQWLRDEMKLINDAYDSEYFATKVQNTNGVYVVPAFTGLGAPYWDPYARGAIFGLTRGVNANHIIRATLESIAYQTRDVLEAMQADSGIRLHALRVDGGAVANNFLMQFQSDILGTRVERPEVREVTALGAAYLAGLAVGFWQNLDELQEKAVIEREFRPGIETTERNYRYAGWKKAVKRAMAWEEHDE</sequence>
<reference key="1">
    <citation type="journal article" date="2009" name="PLoS Genet.">
        <title>Organised genome dynamics in the Escherichia coli species results in highly diverse adaptive paths.</title>
        <authorList>
            <person name="Touchon M."/>
            <person name="Hoede C."/>
            <person name="Tenaillon O."/>
            <person name="Barbe V."/>
            <person name="Baeriswyl S."/>
            <person name="Bidet P."/>
            <person name="Bingen E."/>
            <person name="Bonacorsi S."/>
            <person name="Bouchier C."/>
            <person name="Bouvet O."/>
            <person name="Calteau A."/>
            <person name="Chiapello H."/>
            <person name="Clermont O."/>
            <person name="Cruveiller S."/>
            <person name="Danchin A."/>
            <person name="Diard M."/>
            <person name="Dossat C."/>
            <person name="Karoui M.E."/>
            <person name="Frapy E."/>
            <person name="Garry L."/>
            <person name="Ghigo J.M."/>
            <person name="Gilles A.M."/>
            <person name="Johnson J."/>
            <person name="Le Bouguenec C."/>
            <person name="Lescat M."/>
            <person name="Mangenot S."/>
            <person name="Martinez-Jehanne V."/>
            <person name="Matic I."/>
            <person name="Nassif X."/>
            <person name="Oztas S."/>
            <person name="Petit M.A."/>
            <person name="Pichon C."/>
            <person name="Rouy Z."/>
            <person name="Ruf C.S."/>
            <person name="Schneider D."/>
            <person name="Tourret J."/>
            <person name="Vacherie B."/>
            <person name="Vallenet D."/>
            <person name="Medigue C."/>
            <person name="Rocha E.P.C."/>
            <person name="Denamur E."/>
        </authorList>
    </citation>
    <scope>NUCLEOTIDE SEQUENCE [LARGE SCALE GENOMIC DNA]</scope>
    <source>
        <strain>IAI1</strain>
    </source>
</reference>
<name>GLPK_ECO8A</name>
<comment type="function">
    <text evidence="1">Key enzyme in the regulation of glycerol uptake and metabolism. Catalyzes the phosphorylation of glycerol to yield sn-glycerol 3-phosphate.</text>
</comment>
<comment type="catalytic activity">
    <reaction evidence="1">
        <text>glycerol + ATP = sn-glycerol 3-phosphate + ADP + H(+)</text>
        <dbReference type="Rhea" id="RHEA:21644"/>
        <dbReference type="ChEBI" id="CHEBI:15378"/>
        <dbReference type="ChEBI" id="CHEBI:17754"/>
        <dbReference type="ChEBI" id="CHEBI:30616"/>
        <dbReference type="ChEBI" id="CHEBI:57597"/>
        <dbReference type="ChEBI" id="CHEBI:456216"/>
        <dbReference type="EC" id="2.7.1.30"/>
    </reaction>
</comment>
<comment type="activity regulation">
    <text evidence="1">Activity of this regulatory enzyme is affected by several metabolites. Allosterically and non-competitively inhibited by fructose 1,6-bisphosphate (FBP) and unphosphorylated phosphocarrier protein EIIA-Glc (III-Glc), an integral component of the bacterial phosphotransferase (PTS) system.</text>
</comment>
<comment type="pathway">
    <text evidence="1">Polyol metabolism; glycerol degradation via glycerol kinase pathway; sn-glycerol 3-phosphate from glycerol: step 1/1.</text>
</comment>
<comment type="subunit">
    <text evidence="1">Homotetramer and homodimer (in equilibrium). Heterodimer with EIIA-Glc. Binds 1 zinc ion per glycerol kinase EIIA-Glc dimer. The zinc ion is important for dimerization.</text>
</comment>
<comment type="similarity">
    <text evidence="1">Belongs to the FGGY kinase family.</text>
</comment>
<dbReference type="EC" id="2.7.1.30" evidence="1"/>
<dbReference type="EMBL" id="CU928160">
    <property type="protein sequence ID" value="CAR00902.1"/>
    <property type="molecule type" value="Genomic_DNA"/>
</dbReference>
<dbReference type="RefSeq" id="WP_000136778.1">
    <property type="nucleotide sequence ID" value="NC_011741.1"/>
</dbReference>
<dbReference type="SMR" id="B7M6X7"/>
<dbReference type="KEGG" id="ecr:ECIAI1_4131"/>
<dbReference type="HOGENOM" id="CLU_009281_2_3_6"/>
<dbReference type="UniPathway" id="UPA00618">
    <property type="reaction ID" value="UER00672"/>
</dbReference>
<dbReference type="GO" id="GO:0005829">
    <property type="term" value="C:cytosol"/>
    <property type="evidence" value="ECO:0007669"/>
    <property type="project" value="TreeGrafter"/>
</dbReference>
<dbReference type="GO" id="GO:0005524">
    <property type="term" value="F:ATP binding"/>
    <property type="evidence" value="ECO:0007669"/>
    <property type="project" value="UniProtKB-UniRule"/>
</dbReference>
<dbReference type="GO" id="GO:0004370">
    <property type="term" value="F:glycerol kinase activity"/>
    <property type="evidence" value="ECO:0000250"/>
    <property type="project" value="UniProtKB"/>
</dbReference>
<dbReference type="GO" id="GO:0046872">
    <property type="term" value="F:metal ion binding"/>
    <property type="evidence" value="ECO:0007669"/>
    <property type="project" value="UniProtKB-KW"/>
</dbReference>
<dbReference type="GO" id="GO:0019563">
    <property type="term" value="P:glycerol catabolic process"/>
    <property type="evidence" value="ECO:0007669"/>
    <property type="project" value="UniProtKB-UniRule"/>
</dbReference>
<dbReference type="GO" id="GO:0006071">
    <property type="term" value="P:glycerol metabolic process"/>
    <property type="evidence" value="ECO:0000250"/>
    <property type="project" value="UniProtKB"/>
</dbReference>
<dbReference type="GO" id="GO:0006072">
    <property type="term" value="P:glycerol-3-phosphate metabolic process"/>
    <property type="evidence" value="ECO:0007669"/>
    <property type="project" value="InterPro"/>
</dbReference>
<dbReference type="CDD" id="cd07786">
    <property type="entry name" value="FGGY_EcGK_like"/>
    <property type="match status" value="1"/>
</dbReference>
<dbReference type="FunFam" id="3.30.420.40:FF:000007">
    <property type="entry name" value="Glycerol kinase"/>
    <property type="match status" value="1"/>
</dbReference>
<dbReference type="FunFam" id="3.30.420.40:FF:000008">
    <property type="entry name" value="Glycerol kinase"/>
    <property type="match status" value="1"/>
</dbReference>
<dbReference type="Gene3D" id="3.30.420.40">
    <property type="match status" value="2"/>
</dbReference>
<dbReference type="HAMAP" id="MF_00186">
    <property type="entry name" value="Glycerol_kin"/>
    <property type="match status" value="1"/>
</dbReference>
<dbReference type="InterPro" id="IPR043129">
    <property type="entry name" value="ATPase_NBD"/>
</dbReference>
<dbReference type="InterPro" id="IPR000577">
    <property type="entry name" value="Carb_kinase_FGGY"/>
</dbReference>
<dbReference type="InterPro" id="IPR018483">
    <property type="entry name" value="Carb_kinase_FGGY_CS"/>
</dbReference>
<dbReference type="InterPro" id="IPR018485">
    <property type="entry name" value="FGGY_C"/>
</dbReference>
<dbReference type="InterPro" id="IPR018484">
    <property type="entry name" value="FGGY_N"/>
</dbReference>
<dbReference type="InterPro" id="IPR005999">
    <property type="entry name" value="Glycerol_kin"/>
</dbReference>
<dbReference type="NCBIfam" id="TIGR01311">
    <property type="entry name" value="glycerol_kin"/>
    <property type="match status" value="1"/>
</dbReference>
<dbReference type="NCBIfam" id="NF000756">
    <property type="entry name" value="PRK00047.1"/>
    <property type="match status" value="1"/>
</dbReference>
<dbReference type="PANTHER" id="PTHR10196:SF69">
    <property type="entry name" value="GLYCEROL KINASE"/>
    <property type="match status" value="1"/>
</dbReference>
<dbReference type="PANTHER" id="PTHR10196">
    <property type="entry name" value="SUGAR KINASE"/>
    <property type="match status" value="1"/>
</dbReference>
<dbReference type="Pfam" id="PF02782">
    <property type="entry name" value="FGGY_C"/>
    <property type="match status" value="1"/>
</dbReference>
<dbReference type="Pfam" id="PF00370">
    <property type="entry name" value="FGGY_N"/>
    <property type="match status" value="1"/>
</dbReference>
<dbReference type="PIRSF" id="PIRSF000538">
    <property type="entry name" value="GlpK"/>
    <property type="match status" value="1"/>
</dbReference>
<dbReference type="SUPFAM" id="SSF53067">
    <property type="entry name" value="Actin-like ATPase domain"/>
    <property type="match status" value="2"/>
</dbReference>
<dbReference type="PROSITE" id="PS00933">
    <property type="entry name" value="FGGY_KINASES_1"/>
    <property type="match status" value="1"/>
</dbReference>
<dbReference type="PROSITE" id="PS00445">
    <property type="entry name" value="FGGY_KINASES_2"/>
    <property type="match status" value="1"/>
</dbReference>
<organism>
    <name type="scientific">Escherichia coli O8 (strain IAI1)</name>
    <dbReference type="NCBI Taxonomy" id="585034"/>
    <lineage>
        <taxon>Bacteria</taxon>
        <taxon>Pseudomonadati</taxon>
        <taxon>Pseudomonadota</taxon>
        <taxon>Gammaproteobacteria</taxon>
        <taxon>Enterobacterales</taxon>
        <taxon>Enterobacteriaceae</taxon>
        <taxon>Escherichia</taxon>
    </lineage>
</organism>
<accession>B7M6X7</accession>